<sequence length="207" mass="21546">MPEWALYALAAVAGYLSGSIPFGLVIVKAAGLGDIREIGSKSIGATNVLRTGRKDLALATFLLDSLKAGLVALAFTLLAGREVGFVAGFAAFIGHCYPVWLGFKGGKGIATYAGLLAFVSPLHGLVVAAPVWLGLFALTRISSLAALTAAVAVPPGAWLMGERNSLILAGLALLSVFVFWTHRENIGRLLKGTEPRFGAKKKDAPEA</sequence>
<comment type="function">
    <text evidence="1">Catalyzes the transfer of an acyl group from acyl-phosphate (acyl-PO(4)) to glycerol-3-phosphate (G3P) to form lysophosphatidic acid (LPA). This enzyme utilizes acyl-phosphate as fatty acyl donor, but not acyl-CoA or acyl-ACP.</text>
</comment>
<comment type="catalytic activity">
    <reaction evidence="1">
        <text>an acyl phosphate + sn-glycerol 3-phosphate = a 1-acyl-sn-glycero-3-phosphate + phosphate</text>
        <dbReference type="Rhea" id="RHEA:34075"/>
        <dbReference type="ChEBI" id="CHEBI:43474"/>
        <dbReference type="ChEBI" id="CHEBI:57597"/>
        <dbReference type="ChEBI" id="CHEBI:57970"/>
        <dbReference type="ChEBI" id="CHEBI:59918"/>
        <dbReference type="EC" id="2.3.1.275"/>
    </reaction>
</comment>
<comment type="pathway">
    <text evidence="1">Lipid metabolism; phospholipid metabolism.</text>
</comment>
<comment type="subunit">
    <text evidence="1">Probably interacts with PlsX.</text>
</comment>
<comment type="subcellular location">
    <subcellularLocation>
        <location evidence="1">Cell inner membrane</location>
        <topology evidence="1">Multi-pass membrane protein</topology>
    </subcellularLocation>
</comment>
<comment type="similarity">
    <text evidence="1">Belongs to the PlsY family.</text>
</comment>
<gene>
    <name evidence="1" type="primary">plsY</name>
    <name type="ordered locus">HNE_2147</name>
</gene>
<protein>
    <recommendedName>
        <fullName evidence="1">Glycerol-3-phosphate acyltransferase</fullName>
    </recommendedName>
    <alternativeName>
        <fullName evidence="1">Acyl-PO4 G3P acyltransferase</fullName>
    </alternativeName>
    <alternativeName>
        <fullName evidence="1">Acyl-phosphate--glycerol-3-phosphate acyltransferase</fullName>
    </alternativeName>
    <alternativeName>
        <fullName evidence="1">G3P acyltransferase</fullName>
        <shortName evidence="1">GPAT</shortName>
        <ecNumber evidence="1">2.3.1.275</ecNumber>
    </alternativeName>
    <alternativeName>
        <fullName evidence="1">Lysophosphatidic acid synthase</fullName>
        <shortName evidence="1">LPA synthase</shortName>
    </alternativeName>
</protein>
<feature type="chain" id="PRO_1000136095" description="Glycerol-3-phosphate acyltransferase">
    <location>
        <begin position="1"/>
        <end position="207"/>
    </location>
</feature>
<feature type="transmembrane region" description="Helical" evidence="1">
    <location>
        <begin position="7"/>
        <end position="27"/>
    </location>
</feature>
<feature type="transmembrane region" description="Helical" evidence="1">
    <location>
        <begin position="58"/>
        <end position="78"/>
    </location>
</feature>
<feature type="transmembrane region" description="Helical" evidence="1">
    <location>
        <begin position="83"/>
        <end position="103"/>
    </location>
</feature>
<feature type="transmembrane region" description="Helical" evidence="1">
    <location>
        <begin position="116"/>
        <end position="136"/>
    </location>
</feature>
<feature type="transmembrane region" description="Helical" evidence="1">
    <location>
        <begin position="141"/>
        <end position="161"/>
    </location>
</feature>
<feature type="transmembrane region" description="Helical" evidence="1">
    <location>
        <begin position="166"/>
        <end position="186"/>
    </location>
</feature>
<reference key="1">
    <citation type="journal article" date="2006" name="J. Bacteriol.">
        <title>Comparative genomic evidence for a close relationship between the dimorphic prosthecate bacteria Hyphomonas neptunium and Caulobacter crescentus.</title>
        <authorList>
            <person name="Badger J.H."/>
            <person name="Hoover T.R."/>
            <person name="Brun Y.V."/>
            <person name="Weiner R.M."/>
            <person name="Laub M.T."/>
            <person name="Alexandre G."/>
            <person name="Mrazek J."/>
            <person name="Ren Q."/>
            <person name="Paulsen I.T."/>
            <person name="Nelson K.E."/>
            <person name="Khouri H.M."/>
            <person name="Radune D."/>
            <person name="Sosa J."/>
            <person name="Dodson R.J."/>
            <person name="Sullivan S.A."/>
            <person name="Rosovitz M.J."/>
            <person name="Madupu R."/>
            <person name="Brinkac L.M."/>
            <person name="Durkin A.S."/>
            <person name="Daugherty S.C."/>
            <person name="Kothari S.P."/>
            <person name="Giglio M.G."/>
            <person name="Zhou L."/>
            <person name="Haft D.H."/>
            <person name="Selengut J.D."/>
            <person name="Davidsen T.M."/>
            <person name="Yang Q."/>
            <person name="Zafar N."/>
            <person name="Ward N.L."/>
        </authorList>
    </citation>
    <scope>NUCLEOTIDE SEQUENCE [LARGE SCALE GENOMIC DNA]</scope>
    <source>
        <strain>ATCC 15444</strain>
    </source>
</reference>
<dbReference type="EC" id="2.3.1.275" evidence="1"/>
<dbReference type="EMBL" id="CP000158">
    <property type="protein sequence ID" value="ABI75373.1"/>
    <property type="molecule type" value="Genomic_DNA"/>
</dbReference>
<dbReference type="RefSeq" id="WP_011647142.1">
    <property type="nucleotide sequence ID" value="NC_008358.1"/>
</dbReference>
<dbReference type="SMR" id="Q0C099"/>
<dbReference type="STRING" id="228405.HNE_2147"/>
<dbReference type="KEGG" id="hne:HNE_2147"/>
<dbReference type="eggNOG" id="COG0344">
    <property type="taxonomic scope" value="Bacteria"/>
</dbReference>
<dbReference type="HOGENOM" id="CLU_081254_1_0_5"/>
<dbReference type="UniPathway" id="UPA00085"/>
<dbReference type="Proteomes" id="UP000001959">
    <property type="component" value="Chromosome"/>
</dbReference>
<dbReference type="GO" id="GO:0005886">
    <property type="term" value="C:plasma membrane"/>
    <property type="evidence" value="ECO:0007669"/>
    <property type="project" value="UniProtKB-SubCell"/>
</dbReference>
<dbReference type="GO" id="GO:0043772">
    <property type="term" value="F:acyl-phosphate glycerol-3-phosphate acyltransferase activity"/>
    <property type="evidence" value="ECO:0007669"/>
    <property type="project" value="UniProtKB-UniRule"/>
</dbReference>
<dbReference type="GO" id="GO:0008654">
    <property type="term" value="P:phospholipid biosynthetic process"/>
    <property type="evidence" value="ECO:0007669"/>
    <property type="project" value="UniProtKB-UniRule"/>
</dbReference>
<dbReference type="HAMAP" id="MF_01043">
    <property type="entry name" value="PlsY"/>
    <property type="match status" value="1"/>
</dbReference>
<dbReference type="InterPro" id="IPR003811">
    <property type="entry name" value="G3P_acylTferase_PlsY"/>
</dbReference>
<dbReference type="NCBIfam" id="TIGR00023">
    <property type="entry name" value="glycerol-3-phosphate 1-O-acyltransferase PlsY"/>
    <property type="match status" value="1"/>
</dbReference>
<dbReference type="PANTHER" id="PTHR30309:SF0">
    <property type="entry name" value="GLYCEROL-3-PHOSPHATE ACYLTRANSFERASE-RELATED"/>
    <property type="match status" value="1"/>
</dbReference>
<dbReference type="PANTHER" id="PTHR30309">
    <property type="entry name" value="INNER MEMBRANE PROTEIN YGIH"/>
    <property type="match status" value="1"/>
</dbReference>
<dbReference type="Pfam" id="PF02660">
    <property type="entry name" value="G3P_acyltransf"/>
    <property type="match status" value="1"/>
</dbReference>
<dbReference type="SMART" id="SM01207">
    <property type="entry name" value="G3P_acyltransf"/>
    <property type="match status" value="1"/>
</dbReference>
<keyword id="KW-0997">Cell inner membrane</keyword>
<keyword id="KW-1003">Cell membrane</keyword>
<keyword id="KW-0444">Lipid biosynthesis</keyword>
<keyword id="KW-0443">Lipid metabolism</keyword>
<keyword id="KW-0472">Membrane</keyword>
<keyword id="KW-0594">Phospholipid biosynthesis</keyword>
<keyword id="KW-1208">Phospholipid metabolism</keyword>
<keyword id="KW-1185">Reference proteome</keyword>
<keyword id="KW-0808">Transferase</keyword>
<keyword id="KW-0812">Transmembrane</keyword>
<keyword id="KW-1133">Transmembrane helix</keyword>
<proteinExistence type="inferred from homology"/>
<evidence type="ECO:0000255" key="1">
    <source>
        <dbReference type="HAMAP-Rule" id="MF_01043"/>
    </source>
</evidence>
<accession>Q0C099</accession>
<organism>
    <name type="scientific">Hyphomonas neptunium (strain ATCC 15444)</name>
    <dbReference type="NCBI Taxonomy" id="228405"/>
    <lineage>
        <taxon>Bacteria</taxon>
        <taxon>Pseudomonadati</taxon>
        <taxon>Pseudomonadota</taxon>
        <taxon>Alphaproteobacteria</taxon>
        <taxon>Hyphomonadales</taxon>
        <taxon>Hyphomonadaceae</taxon>
        <taxon>Hyphomonas</taxon>
    </lineage>
</organism>
<name>PLSY_HYPNA</name>